<reference key="1">
    <citation type="submission" date="2008-02" db="EMBL/GenBank/DDBJ databases">
        <title>Complete sequence of Yersinia pseudotuberculosis YPIII.</title>
        <authorList>
            <consortium name="US DOE Joint Genome Institute"/>
            <person name="Copeland A."/>
            <person name="Lucas S."/>
            <person name="Lapidus A."/>
            <person name="Glavina del Rio T."/>
            <person name="Dalin E."/>
            <person name="Tice H."/>
            <person name="Bruce D."/>
            <person name="Goodwin L."/>
            <person name="Pitluck S."/>
            <person name="Munk A.C."/>
            <person name="Brettin T."/>
            <person name="Detter J.C."/>
            <person name="Han C."/>
            <person name="Tapia R."/>
            <person name="Schmutz J."/>
            <person name="Larimer F."/>
            <person name="Land M."/>
            <person name="Hauser L."/>
            <person name="Challacombe J.F."/>
            <person name="Green L."/>
            <person name="Lindler L.E."/>
            <person name="Nikolich M.P."/>
            <person name="Richardson P."/>
        </authorList>
    </citation>
    <scope>NUCLEOTIDE SEQUENCE [LARGE SCALE GENOMIC DNA]</scope>
    <source>
        <strain>YPIII</strain>
    </source>
</reference>
<name>ATPA_YERPY</name>
<feature type="chain" id="PRO_1000143459" description="ATP synthase subunit alpha">
    <location>
        <begin position="1"/>
        <end position="513"/>
    </location>
</feature>
<feature type="binding site" evidence="1">
    <location>
        <begin position="169"/>
        <end position="176"/>
    </location>
    <ligand>
        <name>ATP</name>
        <dbReference type="ChEBI" id="CHEBI:30616"/>
    </ligand>
</feature>
<feature type="site" description="Required for activity" evidence="1">
    <location>
        <position position="373"/>
    </location>
</feature>
<keyword id="KW-0066">ATP synthesis</keyword>
<keyword id="KW-0067">ATP-binding</keyword>
<keyword id="KW-0997">Cell inner membrane</keyword>
<keyword id="KW-1003">Cell membrane</keyword>
<keyword id="KW-0139">CF(1)</keyword>
<keyword id="KW-0375">Hydrogen ion transport</keyword>
<keyword id="KW-0406">Ion transport</keyword>
<keyword id="KW-0472">Membrane</keyword>
<keyword id="KW-0547">Nucleotide-binding</keyword>
<keyword id="KW-1278">Translocase</keyword>
<keyword id="KW-0813">Transport</keyword>
<dbReference type="EC" id="7.1.2.2" evidence="1"/>
<dbReference type="EMBL" id="CP000950">
    <property type="protein sequence ID" value="ACA70480.1"/>
    <property type="molecule type" value="Genomic_DNA"/>
</dbReference>
<dbReference type="RefSeq" id="WP_002220758.1">
    <property type="nucleotide sequence ID" value="NZ_CP009792.1"/>
</dbReference>
<dbReference type="SMR" id="B1JRN0"/>
<dbReference type="GeneID" id="96663461"/>
<dbReference type="KEGG" id="ypy:YPK_4224"/>
<dbReference type="PATRIC" id="fig|502800.11.peg.574"/>
<dbReference type="GO" id="GO:0005886">
    <property type="term" value="C:plasma membrane"/>
    <property type="evidence" value="ECO:0007669"/>
    <property type="project" value="UniProtKB-SubCell"/>
</dbReference>
<dbReference type="GO" id="GO:0045259">
    <property type="term" value="C:proton-transporting ATP synthase complex"/>
    <property type="evidence" value="ECO:0007669"/>
    <property type="project" value="UniProtKB-KW"/>
</dbReference>
<dbReference type="GO" id="GO:0043531">
    <property type="term" value="F:ADP binding"/>
    <property type="evidence" value="ECO:0007669"/>
    <property type="project" value="TreeGrafter"/>
</dbReference>
<dbReference type="GO" id="GO:0005524">
    <property type="term" value="F:ATP binding"/>
    <property type="evidence" value="ECO:0007669"/>
    <property type="project" value="UniProtKB-UniRule"/>
</dbReference>
<dbReference type="GO" id="GO:0046933">
    <property type="term" value="F:proton-transporting ATP synthase activity, rotational mechanism"/>
    <property type="evidence" value="ECO:0007669"/>
    <property type="project" value="UniProtKB-UniRule"/>
</dbReference>
<dbReference type="CDD" id="cd18113">
    <property type="entry name" value="ATP-synt_F1_alpha_C"/>
    <property type="match status" value="1"/>
</dbReference>
<dbReference type="CDD" id="cd18116">
    <property type="entry name" value="ATP-synt_F1_alpha_N"/>
    <property type="match status" value="1"/>
</dbReference>
<dbReference type="CDD" id="cd01132">
    <property type="entry name" value="F1-ATPase_alpha_CD"/>
    <property type="match status" value="1"/>
</dbReference>
<dbReference type="FunFam" id="1.20.150.20:FF:000001">
    <property type="entry name" value="ATP synthase subunit alpha"/>
    <property type="match status" value="1"/>
</dbReference>
<dbReference type="FunFam" id="2.40.30.20:FF:000001">
    <property type="entry name" value="ATP synthase subunit alpha"/>
    <property type="match status" value="1"/>
</dbReference>
<dbReference type="FunFam" id="3.40.50.300:FF:000002">
    <property type="entry name" value="ATP synthase subunit alpha"/>
    <property type="match status" value="1"/>
</dbReference>
<dbReference type="Gene3D" id="2.40.30.20">
    <property type="match status" value="1"/>
</dbReference>
<dbReference type="Gene3D" id="1.20.150.20">
    <property type="entry name" value="ATP synthase alpha/beta chain, C-terminal domain"/>
    <property type="match status" value="1"/>
</dbReference>
<dbReference type="Gene3D" id="3.40.50.300">
    <property type="entry name" value="P-loop containing nucleotide triphosphate hydrolases"/>
    <property type="match status" value="1"/>
</dbReference>
<dbReference type="HAMAP" id="MF_01346">
    <property type="entry name" value="ATP_synth_alpha_bact"/>
    <property type="match status" value="1"/>
</dbReference>
<dbReference type="InterPro" id="IPR023366">
    <property type="entry name" value="ATP_synth_asu-like_sf"/>
</dbReference>
<dbReference type="InterPro" id="IPR000793">
    <property type="entry name" value="ATP_synth_asu_C"/>
</dbReference>
<dbReference type="InterPro" id="IPR038376">
    <property type="entry name" value="ATP_synth_asu_C_sf"/>
</dbReference>
<dbReference type="InterPro" id="IPR033732">
    <property type="entry name" value="ATP_synth_F1_a_nt-bd_dom"/>
</dbReference>
<dbReference type="InterPro" id="IPR005294">
    <property type="entry name" value="ATP_synth_F1_asu"/>
</dbReference>
<dbReference type="InterPro" id="IPR020003">
    <property type="entry name" value="ATPase_a/bsu_AS"/>
</dbReference>
<dbReference type="InterPro" id="IPR004100">
    <property type="entry name" value="ATPase_F1/V1/A1_a/bsu_N"/>
</dbReference>
<dbReference type="InterPro" id="IPR036121">
    <property type="entry name" value="ATPase_F1/V1/A1_a/bsu_N_sf"/>
</dbReference>
<dbReference type="InterPro" id="IPR000194">
    <property type="entry name" value="ATPase_F1/V1/A1_a/bsu_nucl-bd"/>
</dbReference>
<dbReference type="InterPro" id="IPR027417">
    <property type="entry name" value="P-loop_NTPase"/>
</dbReference>
<dbReference type="NCBIfam" id="TIGR00962">
    <property type="entry name" value="atpA"/>
    <property type="match status" value="1"/>
</dbReference>
<dbReference type="NCBIfam" id="NF009884">
    <property type="entry name" value="PRK13343.1"/>
    <property type="match status" value="1"/>
</dbReference>
<dbReference type="PANTHER" id="PTHR48082">
    <property type="entry name" value="ATP SYNTHASE SUBUNIT ALPHA, MITOCHONDRIAL"/>
    <property type="match status" value="1"/>
</dbReference>
<dbReference type="PANTHER" id="PTHR48082:SF2">
    <property type="entry name" value="ATP SYNTHASE SUBUNIT ALPHA, MITOCHONDRIAL"/>
    <property type="match status" value="1"/>
</dbReference>
<dbReference type="Pfam" id="PF00006">
    <property type="entry name" value="ATP-synt_ab"/>
    <property type="match status" value="1"/>
</dbReference>
<dbReference type="Pfam" id="PF00306">
    <property type="entry name" value="ATP-synt_ab_C"/>
    <property type="match status" value="1"/>
</dbReference>
<dbReference type="Pfam" id="PF02874">
    <property type="entry name" value="ATP-synt_ab_N"/>
    <property type="match status" value="1"/>
</dbReference>
<dbReference type="SUPFAM" id="SSF47917">
    <property type="entry name" value="C-terminal domain of alpha and beta subunits of F1 ATP synthase"/>
    <property type="match status" value="1"/>
</dbReference>
<dbReference type="SUPFAM" id="SSF50615">
    <property type="entry name" value="N-terminal domain of alpha and beta subunits of F1 ATP synthase"/>
    <property type="match status" value="1"/>
</dbReference>
<dbReference type="SUPFAM" id="SSF52540">
    <property type="entry name" value="P-loop containing nucleoside triphosphate hydrolases"/>
    <property type="match status" value="1"/>
</dbReference>
<dbReference type="PROSITE" id="PS00152">
    <property type="entry name" value="ATPASE_ALPHA_BETA"/>
    <property type="match status" value="1"/>
</dbReference>
<protein>
    <recommendedName>
        <fullName evidence="1">ATP synthase subunit alpha</fullName>
        <ecNumber evidence="1">7.1.2.2</ecNumber>
    </recommendedName>
    <alternativeName>
        <fullName evidence="1">ATP synthase F1 sector subunit alpha</fullName>
    </alternativeName>
    <alternativeName>
        <fullName evidence="1">F-ATPase subunit alpha</fullName>
    </alternativeName>
</protein>
<proteinExistence type="inferred from homology"/>
<organism>
    <name type="scientific">Yersinia pseudotuberculosis serotype O:3 (strain YPIII)</name>
    <dbReference type="NCBI Taxonomy" id="502800"/>
    <lineage>
        <taxon>Bacteria</taxon>
        <taxon>Pseudomonadati</taxon>
        <taxon>Pseudomonadota</taxon>
        <taxon>Gammaproteobacteria</taxon>
        <taxon>Enterobacterales</taxon>
        <taxon>Yersiniaceae</taxon>
        <taxon>Yersinia</taxon>
    </lineage>
</organism>
<sequence length="513" mass="55200">MQLNSTEISELIKQRIAQFNVVSEAHNEGTIVSVSDGIIRVHGLADVMQGEMIALPGNRYAIALNLERDSVGAVVMGPYADLAEGMKVKCTGRILEVPVGRGLLGRVVNTLGEPIDGKGSIENDGFSAVEAIAPGVIERQSVDEPVQTGYKSVDAMIPIGRGQRELIIGDRQTGKTALAIDAIINQRDSGIKCVYVAIGQKASTVANVVRKLEEHDALANTIVVVATASESAALQYLAPYSGCAMGEYFRDRGEDALIIYDDLSKQAVAYRQISLLLRRPPGREAYPGDVFYLHSRLLERAARVNAEYVEAFTKGEVKGKTGSLTALPIIETQAGDVSAFVPTNVISITDGQIFLESSLFNAGIRPAVNPGISVSRVGGAAQTKIMKKLSGGIRTALAQYRELAAFSQFASDLDDATRKQLSHGQKVTELLKQKQYAPMSVAQQSLVLFAAERGYLGDVELAKVGSFEAALLAFADREHAELLQQINQTGAYNDEIEAKLKGILDTFKATQSW</sequence>
<comment type="function">
    <text evidence="1">Produces ATP from ADP in the presence of a proton gradient across the membrane. The alpha chain is a regulatory subunit.</text>
</comment>
<comment type="catalytic activity">
    <reaction evidence="1">
        <text>ATP + H2O + 4 H(+)(in) = ADP + phosphate + 5 H(+)(out)</text>
        <dbReference type="Rhea" id="RHEA:57720"/>
        <dbReference type="ChEBI" id="CHEBI:15377"/>
        <dbReference type="ChEBI" id="CHEBI:15378"/>
        <dbReference type="ChEBI" id="CHEBI:30616"/>
        <dbReference type="ChEBI" id="CHEBI:43474"/>
        <dbReference type="ChEBI" id="CHEBI:456216"/>
        <dbReference type="EC" id="7.1.2.2"/>
    </reaction>
</comment>
<comment type="subunit">
    <text evidence="1">F-type ATPases have 2 components, CF(1) - the catalytic core - and CF(0) - the membrane proton channel. CF(1) has five subunits: alpha(3), beta(3), gamma(1), delta(1), epsilon(1). CF(0) has three main subunits: a(1), b(2) and c(9-12). The alpha and beta chains form an alternating ring which encloses part of the gamma chain. CF(1) is attached to CF(0) by a central stalk formed by the gamma and epsilon chains, while a peripheral stalk is formed by the delta and b chains.</text>
</comment>
<comment type="subcellular location">
    <subcellularLocation>
        <location evidence="1">Cell inner membrane</location>
        <topology evidence="1">Peripheral membrane protein</topology>
    </subcellularLocation>
</comment>
<comment type="similarity">
    <text evidence="1">Belongs to the ATPase alpha/beta chains family.</text>
</comment>
<gene>
    <name evidence="1" type="primary">atpA</name>
    <name type="ordered locus">YPK_4224</name>
</gene>
<evidence type="ECO:0000255" key="1">
    <source>
        <dbReference type="HAMAP-Rule" id="MF_01346"/>
    </source>
</evidence>
<accession>B1JRN0</accession>